<protein>
    <recommendedName>
        <fullName evidence="1">Bacteriohemerythrin</fullName>
    </recommendedName>
</protein>
<organism>
    <name type="scientific">Campylobacter jejuni subsp. jejuni serotype O:6 (strain 81116 / NCTC 11828)</name>
    <dbReference type="NCBI Taxonomy" id="407148"/>
    <lineage>
        <taxon>Bacteria</taxon>
        <taxon>Pseudomonadati</taxon>
        <taxon>Campylobacterota</taxon>
        <taxon>Epsilonproteobacteria</taxon>
        <taxon>Campylobacterales</taxon>
        <taxon>Campylobacteraceae</taxon>
        <taxon>Campylobacter</taxon>
    </lineage>
</organism>
<keyword id="KW-0408">Iron</keyword>
<keyword id="KW-0479">Metal-binding</keyword>
<keyword id="KW-0561">Oxygen transport</keyword>
<keyword id="KW-0813">Transport</keyword>
<reference key="1">
    <citation type="journal article" date="2007" name="J. Bacteriol.">
        <title>The complete genome sequence of Campylobacter jejuni strain 81116 (NCTC11828).</title>
        <authorList>
            <person name="Pearson B.M."/>
            <person name="Gaskin D.J.H."/>
            <person name="Segers R.P.A.M."/>
            <person name="Wells J.M."/>
            <person name="Nuijten P.J.M."/>
            <person name="van Vliet A.H.M."/>
        </authorList>
    </citation>
    <scope>NUCLEOTIDE SEQUENCE [LARGE SCALE GENOMIC DNA]</scope>
    <source>
        <strain>81116 / NCTC 11828</strain>
    </source>
</reference>
<sequence>MTYNEKIISMNNDLLDHQHKELFEISKKLSLMNQRHVGTKELKIVLRELLIMINRHFSDEEAFMREIEYPYINHHTRIHRKIILEIEEIIISEAKFVNIMTEKLNLVVQDFIFKHTAKEDSKIVKYYEEKFKK</sequence>
<dbReference type="EMBL" id="CP000814">
    <property type="protein sequence ID" value="ABV51818.1"/>
    <property type="molecule type" value="Genomic_DNA"/>
</dbReference>
<dbReference type="RefSeq" id="WP_002851900.1">
    <property type="nucleotide sequence ID" value="NC_009839.1"/>
</dbReference>
<dbReference type="SMR" id="A8FK31"/>
<dbReference type="KEGG" id="cju:C8J_0219"/>
<dbReference type="HOGENOM" id="CLU_086902_3_2_7"/>
<dbReference type="GO" id="GO:0005506">
    <property type="term" value="F:iron ion binding"/>
    <property type="evidence" value="ECO:0007669"/>
    <property type="project" value="UniProtKB-UniRule"/>
</dbReference>
<dbReference type="GO" id="GO:0005344">
    <property type="term" value="F:oxygen carrier activity"/>
    <property type="evidence" value="ECO:0007669"/>
    <property type="project" value="UniProtKB-UniRule"/>
</dbReference>
<dbReference type="CDD" id="cd12107">
    <property type="entry name" value="Hemerythrin"/>
    <property type="match status" value="1"/>
</dbReference>
<dbReference type="Gene3D" id="1.20.120.50">
    <property type="entry name" value="Hemerythrin-like"/>
    <property type="match status" value="1"/>
</dbReference>
<dbReference type="HAMAP" id="MF_00556">
    <property type="entry name" value="Hemerythrin"/>
    <property type="match status" value="1"/>
</dbReference>
<dbReference type="InterPro" id="IPR023504">
    <property type="entry name" value="Bacteriohemerythrin-like"/>
</dbReference>
<dbReference type="InterPro" id="IPR016131">
    <property type="entry name" value="Haemerythrin_Fe_BS"/>
</dbReference>
<dbReference type="InterPro" id="IPR050669">
    <property type="entry name" value="Hemerythrin"/>
</dbReference>
<dbReference type="InterPro" id="IPR012312">
    <property type="entry name" value="Hemerythrin-like"/>
</dbReference>
<dbReference type="InterPro" id="IPR035938">
    <property type="entry name" value="Hemerythrin-like_sf"/>
</dbReference>
<dbReference type="InterPro" id="IPR012827">
    <property type="entry name" value="Hemerythrin_metal-bd"/>
</dbReference>
<dbReference type="NCBIfam" id="TIGR02481">
    <property type="entry name" value="hemeryth_dom"/>
    <property type="match status" value="1"/>
</dbReference>
<dbReference type="PANTHER" id="PTHR37164">
    <property type="entry name" value="BACTERIOHEMERYTHRIN"/>
    <property type="match status" value="1"/>
</dbReference>
<dbReference type="PANTHER" id="PTHR37164:SF1">
    <property type="entry name" value="BACTERIOHEMERYTHRIN"/>
    <property type="match status" value="1"/>
</dbReference>
<dbReference type="Pfam" id="PF01814">
    <property type="entry name" value="Hemerythrin"/>
    <property type="match status" value="1"/>
</dbReference>
<dbReference type="SUPFAM" id="SSF47188">
    <property type="entry name" value="Hemerythrin-like"/>
    <property type="match status" value="1"/>
</dbReference>
<dbReference type="PROSITE" id="PS00550">
    <property type="entry name" value="HEMERYTHRINS"/>
    <property type="match status" value="1"/>
</dbReference>
<gene>
    <name type="ordered locus">C8J_0219</name>
</gene>
<feature type="chain" id="PRO_1000072561" description="Bacteriohemerythrin">
    <location>
        <begin position="1"/>
        <end position="133"/>
    </location>
</feature>
<feature type="binding site" evidence="1">
    <location>
        <position position="19"/>
    </location>
    <ligand>
        <name>Fe cation</name>
        <dbReference type="ChEBI" id="CHEBI:24875"/>
        <label>1</label>
    </ligand>
</feature>
<feature type="binding site" evidence="1">
    <location>
        <position position="56"/>
    </location>
    <ligand>
        <name>Fe cation</name>
        <dbReference type="ChEBI" id="CHEBI:24875"/>
        <label>1</label>
    </ligand>
</feature>
<feature type="binding site" evidence="1">
    <location>
        <position position="60"/>
    </location>
    <ligand>
        <name>Fe cation</name>
        <dbReference type="ChEBI" id="CHEBI:24875"/>
        <label>1</label>
    </ligand>
</feature>
<feature type="binding site" evidence="1">
    <location>
        <position position="60"/>
    </location>
    <ligand>
        <name>Fe cation</name>
        <dbReference type="ChEBI" id="CHEBI:24875"/>
        <label>2</label>
    </ligand>
</feature>
<feature type="binding site" evidence="1">
    <location>
        <position position="75"/>
    </location>
    <ligand>
        <name>Fe cation</name>
        <dbReference type="ChEBI" id="CHEBI:24875"/>
        <label>2</label>
    </ligand>
</feature>
<feature type="binding site" evidence="1">
    <location>
        <position position="79"/>
    </location>
    <ligand>
        <name>Fe cation</name>
        <dbReference type="ChEBI" id="CHEBI:24875"/>
        <label>2</label>
    </ligand>
</feature>
<feature type="binding site" evidence="1">
    <location>
        <position position="115"/>
    </location>
    <ligand>
        <name>Fe cation</name>
        <dbReference type="ChEBI" id="CHEBI:24875"/>
        <label>2</label>
    </ligand>
</feature>
<feature type="binding site" evidence="1">
    <location>
        <position position="120"/>
    </location>
    <ligand>
        <name>Fe cation</name>
        <dbReference type="ChEBI" id="CHEBI:24875"/>
        <label>1</label>
    </ligand>
</feature>
<feature type="binding site" evidence="1">
    <location>
        <position position="120"/>
    </location>
    <ligand>
        <name>Fe cation</name>
        <dbReference type="ChEBI" id="CHEBI:24875"/>
        <label>2</label>
    </ligand>
</feature>
<name>HEMTB_CAMJ8</name>
<comment type="function">
    <text evidence="1">Oxygen-binding protein. May be involved in a storage mechanism or for delivery to oxygen-requiring enzymes. The oxygen-binding site contains two iron atoms.</text>
</comment>
<comment type="subunit">
    <text evidence="1">Monomer.</text>
</comment>
<comment type="similarity">
    <text evidence="1">Belongs to the hemerythrin family.</text>
</comment>
<proteinExistence type="inferred from homology"/>
<evidence type="ECO:0000255" key="1">
    <source>
        <dbReference type="HAMAP-Rule" id="MF_00556"/>
    </source>
</evidence>
<accession>A8FK31</accession>